<evidence type="ECO:0000255" key="1">
    <source>
        <dbReference type="HAMAP-Rule" id="MF_00454"/>
    </source>
</evidence>
<reference key="1">
    <citation type="submission" date="2009-01" db="EMBL/GenBank/DDBJ databases">
        <title>Complete sequence of chromosome of Methylobacterium nodulans ORS 2060.</title>
        <authorList>
            <consortium name="US DOE Joint Genome Institute"/>
            <person name="Lucas S."/>
            <person name="Copeland A."/>
            <person name="Lapidus A."/>
            <person name="Glavina del Rio T."/>
            <person name="Dalin E."/>
            <person name="Tice H."/>
            <person name="Bruce D."/>
            <person name="Goodwin L."/>
            <person name="Pitluck S."/>
            <person name="Sims D."/>
            <person name="Brettin T."/>
            <person name="Detter J.C."/>
            <person name="Han C."/>
            <person name="Larimer F."/>
            <person name="Land M."/>
            <person name="Hauser L."/>
            <person name="Kyrpides N."/>
            <person name="Ivanova N."/>
            <person name="Marx C.J."/>
            <person name="Richardson P."/>
        </authorList>
    </citation>
    <scope>NUCLEOTIDE SEQUENCE [LARGE SCALE GENOMIC DNA]</scope>
    <source>
        <strain>LMG 21967 / CNCM I-2342 / ORS 2060</strain>
    </source>
</reference>
<keyword id="KW-0997">Cell inner membrane</keyword>
<keyword id="KW-1003">Cell membrane</keyword>
<keyword id="KW-0407">Ion channel</keyword>
<keyword id="KW-0406">Ion transport</keyword>
<keyword id="KW-0472">Membrane</keyword>
<keyword id="KW-0479">Metal-binding</keyword>
<keyword id="KW-1185">Reference proteome</keyword>
<keyword id="KW-0915">Sodium</keyword>
<keyword id="KW-0812">Transmembrane</keyword>
<keyword id="KW-1133">Transmembrane helix</keyword>
<keyword id="KW-0813">Transport</keyword>
<accession>B8IHT8</accession>
<sequence length="124" mass="12494">MLNTLVVFVGAGLGGALRHGVNLAAARLGGSFPAGTMIINIAGSLAMGLLTGWFAVRGGMPQAWRLFLTTGILGGFTTFSTFSLEAFLLMERGAFAAAALYVLGSVAAGIAGVGASLAVIRQFG</sequence>
<organism>
    <name type="scientific">Methylobacterium nodulans (strain LMG 21967 / CNCM I-2342 / ORS 2060)</name>
    <dbReference type="NCBI Taxonomy" id="460265"/>
    <lineage>
        <taxon>Bacteria</taxon>
        <taxon>Pseudomonadati</taxon>
        <taxon>Pseudomonadota</taxon>
        <taxon>Alphaproteobacteria</taxon>
        <taxon>Hyphomicrobiales</taxon>
        <taxon>Methylobacteriaceae</taxon>
        <taxon>Methylobacterium</taxon>
    </lineage>
</organism>
<name>FLUC_METNO</name>
<dbReference type="EMBL" id="CP001349">
    <property type="protein sequence ID" value="ACL55976.1"/>
    <property type="molecule type" value="Genomic_DNA"/>
</dbReference>
<dbReference type="RefSeq" id="WP_015927674.1">
    <property type="nucleotide sequence ID" value="NC_011894.1"/>
</dbReference>
<dbReference type="SMR" id="B8IHT8"/>
<dbReference type="STRING" id="460265.Mnod_0963"/>
<dbReference type="KEGG" id="mno:Mnod_0963"/>
<dbReference type="eggNOG" id="COG0239">
    <property type="taxonomic scope" value="Bacteria"/>
</dbReference>
<dbReference type="HOGENOM" id="CLU_114342_3_0_5"/>
<dbReference type="OrthoDB" id="9806299at2"/>
<dbReference type="Proteomes" id="UP000008207">
    <property type="component" value="Chromosome"/>
</dbReference>
<dbReference type="GO" id="GO:0005886">
    <property type="term" value="C:plasma membrane"/>
    <property type="evidence" value="ECO:0007669"/>
    <property type="project" value="UniProtKB-SubCell"/>
</dbReference>
<dbReference type="GO" id="GO:0062054">
    <property type="term" value="F:fluoride channel activity"/>
    <property type="evidence" value="ECO:0007669"/>
    <property type="project" value="UniProtKB-UniRule"/>
</dbReference>
<dbReference type="GO" id="GO:0046872">
    <property type="term" value="F:metal ion binding"/>
    <property type="evidence" value="ECO:0007669"/>
    <property type="project" value="UniProtKB-KW"/>
</dbReference>
<dbReference type="GO" id="GO:0140114">
    <property type="term" value="P:cellular detoxification of fluoride"/>
    <property type="evidence" value="ECO:0007669"/>
    <property type="project" value="UniProtKB-UniRule"/>
</dbReference>
<dbReference type="HAMAP" id="MF_00454">
    <property type="entry name" value="FluC"/>
    <property type="match status" value="1"/>
</dbReference>
<dbReference type="InterPro" id="IPR003691">
    <property type="entry name" value="FluC"/>
</dbReference>
<dbReference type="NCBIfam" id="TIGR00494">
    <property type="entry name" value="crcB"/>
    <property type="match status" value="1"/>
</dbReference>
<dbReference type="NCBIfam" id="NF010794">
    <property type="entry name" value="PRK14198.1"/>
    <property type="match status" value="1"/>
</dbReference>
<dbReference type="PANTHER" id="PTHR28259">
    <property type="entry name" value="FLUORIDE EXPORT PROTEIN 1-RELATED"/>
    <property type="match status" value="1"/>
</dbReference>
<dbReference type="PANTHER" id="PTHR28259:SF1">
    <property type="entry name" value="FLUORIDE EXPORT PROTEIN 1-RELATED"/>
    <property type="match status" value="1"/>
</dbReference>
<dbReference type="Pfam" id="PF02537">
    <property type="entry name" value="CRCB"/>
    <property type="match status" value="1"/>
</dbReference>
<gene>
    <name evidence="1" type="primary">fluC</name>
    <name evidence="1" type="synonym">crcB</name>
    <name type="ordered locus">Mnod_0963</name>
</gene>
<protein>
    <recommendedName>
        <fullName evidence="1">Fluoride-specific ion channel FluC</fullName>
    </recommendedName>
</protein>
<comment type="function">
    <text evidence="1">Fluoride-specific ion channel. Important for reducing fluoride concentration in the cell, thus reducing its toxicity.</text>
</comment>
<comment type="catalytic activity">
    <reaction evidence="1">
        <text>fluoride(in) = fluoride(out)</text>
        <dbReference type="Rhea" id="RHEA:76159"/>
        <dbReference type="ChEBI" id="CHEBI:17051"/>
    </reaction>
    <physiologicalReaction direction="left-to-right" evidence="1">
        <dbReference type="Rhea" id="RHEA:76160"/>
    </physiologicalReaction>
</comment>
<comment type="activity regulation">
    <text evidence="1">Na(+) is not transported, but it plays an essential structural role and its presence is essential for fluoride channel function.</text>
</comment>
<comment type="subcellular location">
    <subcellularLocation>
        <location evidence="1">Cell inner membrane</location>
        <topology evidence="1">Multi-pass membrane protein</topology>
    </subcellularLocation>
</comment>
<comment type="similarity">
    <text evidence="1">Belongs to the fluoride channel Fluc/FEX (TC 1.A.43) family.</text>
</comment>
<proteinExistence type="inferred from homology"/>
<feature type="chain" id="PRO_1000135323" description="Fluoride-specific ion channel FluC">
    <location>
        <begin position="1"/>
        <end position="124"/>
    </location>
</feature>
<feature type="transmembrane region" description="Helical" evidence="1">
    <location>
        <begin position="5"/>
        <end position="25"/>
    </location>
</feature>
<feature type="transmembrane region" description="Helical" evidence="1">
    <location>
        <begin position="36"/>
        <end position="56"/>
    </location>
</feature>
<feature type="transmembrane region" description="Helical" evidence="1">
    <location>
        <begin position="70"/>
        <end position="90"/>
    </location>
</feature>
<feature type="transmembrane region" description="Helical" evidence="1">
    <location>
        <begin position="100"/>
        <end position="120"/>
    </location>
</feature>
<feature type="binding site" evidence="1">
    <location>
        <position position="74"/>
    </location>
    <ligand>
        <name>Na(+)</name>
        <dbReference type="ChEBI" id="CHEBI:29101"/>
        <note>structural</note>
    </ligand>
</feature>
<feature type="binding site" evidence="1">
    <location>
        <position position="77"/>
    </location>
    <ligand>
        <name>Na(+)</name>
        <dbReference type="ChEBI" id="CHEBI:29101"/>
        <note>structural</note>
    </ligand>
</feature>